<protein>
    <recommendedName>
        <fullName>Uncharacterized protein pYV0051</fullName>
    </recommendedName>
</protein>
<organism>
    <name type="scientific">Yersinia pseudotuberculosis serotype I (strain IP32953)</name>
    <dbReference type="NCBI Taxonomy" id="273123"/>
    <lineage>
        <taxon>Bacteria</taxon>
        <taxon>Pseudomonadati</taxon>
        <taxon>Pseudomonadota</taxon>
        <taxon>Gammaproteobacteria</taxon>
        <taxon>Enterobacterales</taxon>
        <taxon>Yersiniaceae</taxon>
        <taxon>Yersinia</taxon>
    </lineage>
</organism>
<keyword id="KW-0614">Plasmid</keyword>
<gene>
    <name type="ordered locus">pYV0051</name>
</gene>
<dbReference type="EMBL" id="BX936399">
    <property type="protein sequence ID" value="CAF25394.1"/>
    <property type="molecule type" value="Genomic_DNA"/>
</dbReference>
<dbReference type="EMBL" id="L06215">
    <property type="protein sequence ID" value="AAA72323.1"/>
    <property type="molecule type" value="Genomic_DNA"/>
</dbReference>
<dbReference type="SMR" id="P37133"/>
<dbReference type="KEGG" id="yps:pYV0051"/>
<dbReference type="Proteomes" id="UP000001011">
    <property type="component" value="Plasmid pYV"/>
</dbReference>
<dbReference type="InterPro" id="IPR032874">
    <property type="entry name" value="DDE_dom"/>
</dbReference>
<dbReference type="InterPro" id="IPR052183">
    <property type="entry name" value="IS_Transposase"/>
</dbReference>
<dbReference type="PANTHER" id="PTHR35528">
    <property type="entry name" value="BLL1675 PROTEIN"/>
    <property type="match status" value="1"/>
</dbReference>
<dbReference type="PANTHER" id="PTHR35528:SF3">
    <property type="entry name" value="BLL1675 PROTEIN"/>
    <property type="match status" value="1"/>
</dbReference>
<dbReference type="Pfam" id="PF13610">
    <property type="entry name" value="DDE_Tnp_IS240"/>
    <property type="match status" value="1"/>
</dbReference>
<geneLocation type="plasmid">
    <name>pIB1</name>
</geneLocation>
<geneLocation type="plasmid">
    <name>pYV</name>
</geneLocation>
<reference key="1">
    <citation type="journal article" date="2004" name="Proc. Natl. Acad. Sci. U.S.A.">
        <title>Insights into the evolution of Yersinia pestis through whole-genome comparison with Yersinia pseudotuberculosis.</title>
        <authorList>
            <person name="Chain P.S.G."/>
            <person name="Carniel E."/>
            <person name="Larimer F.W."/>
            <person name="Lamerdin J."/>
            <person name="Stoutland P.O."/>
            <person name="Regala W.M."/>
            <person name="Georgescu A.M."/>
            <person name="Vergez L.M."/>
            <person name="Land M.L."/>
            <person name="Motin V.L."/>
            <person name="Brubaker R.R."/>
            <person name="Fowler J."/>
            <person name="Hinnebusch J."/>
            <person name="Marceau M."/>
            <person name="Medigue C."/>
            <person name="Simonet M."/>
            <person name="Chenal-Francisque V."/>
            <person name="Souza B."/>
            <person name="Dacheux D."/>
            <person name="Elliott J.M."/>
            <person name="Derbise A."/>
            <person name="Hauser L.J."/>
            <person name="Garcia E."/>
        </authorList>
    </citation>
    <scope>NUCLEOTIDE SEQUENCE [LARGE SCALE GENOMIC DNA]</scope>
    <source>
        <strain>IP32953</strain>
        <plasmid>pYV</plasmid>
    </source>
</reference>
<reference key="2">
    <citation type="journal article" date="1993" name="Infect. Immun.">
        <title>YopB and YopD constitute a novel class of Yersinia Yop proteins.</title>
        <authorList>
            <person name="Haakansson S."/>
            <person name="Bergman T."/>
            <person name="Vanooteghem J.-C."/>
            <person name="Cornelis G."/>
            <person name="Wolf-Watz H."/>
        </authorList>
    </citation>
    <scope>NUCLEOTIDE SEQUENCE [GENOMIC DNA] OF 4-107</scope>
    <source>
        <strain>YPIII / Serotype O:3</strain>
        <plasmid>pIB1</plasmid>
    </source>
</reference>
<sequence>MKRYQFTDADSSWQLDEIYIRVNGKWFYLYRAINKHGTTLDFYFSPKRNKNTAYPFIKRVLKTYSVERQPKILNTDKHSSYGYAITRLMKEGKDTRCCKAAASQIPE</sequence>
<feature type="chain" id="PRO_0000066091" description="Uncharacterized protein pYV0051">
    <location>
        <begin position="1"/>
        <end position="107"/>
    </location>
</feature>
<feature type="sequence conflict" description="In Ref. 2; AAA72323." evidence="1" ref="2">
    <original>T</original>
    <variation>P</variation>
    <location>
        <position position="63"/>
    </location>
</feature>
<feature type="sequence conflict" description="In Ref. 2; AAA72323." evidence="1" ref="2">
    <original>R</original>
    <variation>G</variation>
    <location>
        <position position="96"/>
    </location>
</feature>
<accession>P37133</accession>
<accession>Q663L5</accession>
<evidence type="ECO:0000305" key="1"/>
<name>Y4551_YERPS</name>
<proteinExistence type="predicted"/>